<reference key="1">
    <citation type="submission" date="2006-01" db="EMBL/GenBank/DDBJ databases">
        <title>Complete sequence of Anaeromyxobacter dehalogenans 2CP-C.</title>
        <authorList>
            <person name="Copeland A."/>
            <person name="Lucas S."/>
            <person name="Lapidus A."/>
            <person name="Barry K."/>
            <person name="Detter J.C."/>
            <person name="Glavina T."/>
            <person name="Hammon N."/>
            <person name="Israni S."/>
            <person name="Pitluck S."/>
            <person name="Brettin T."/>
            <person name="Bruce D."/>
            <person name="Han C."/>
            <person name="Tapia R."/>
            <person name="Gilna P."/>
            <person name="Kiss H."/>
            <person name="Schmutz J."/>
            <person name="Larimer F."/>
            <person name="Land M."/>
            <person name="Kyrpides N."/>
            <person name="Anderson I."/>
            <person name="Sanford R.A."/>
            <person name="Ritalahti K.M."/>
            <person name="Thomas H.S."/>
            <person name="Kirby J.R."/>
            <person name="Zhulin I.B."/>
            <person name="Loeffler F.E."/>
            <person name="Richardson P."/>
        </authorList>
    </citation>
    <scope>NUCLEOTIDE SEQUENCE [LARGE SCALE GENOMIC DNA]</scope>
    <source>
        <strain>2CP-C</strain>
    </source>
</reference>
<protein>
    <recommendedName>
        <fullName evidence="1">Malate dehydrogenase 2</fullName>
        <ecNumber evidence="1">1.1.1.37</ecNumber>
    </recommendedName>
</protein>
<dbReference type="EC" id="1.1.1.37" evidence="1"/>
<dbReference type="EMBL" id="CP000251">
    <property type="protein sequence ID" value="ABC81996.1"/>
    <property type="molecule type" value="Genomic_DNA"/>
</dbReference>
<dbReference type="SMR" id="Q2IK16"/>
<dbReference type="STRING" id="290397.Adeh_2226"/>
<dbReference type="KEGG" id="ade:Adeh_2226"/>
<dbReference type="eggNOG" id="COG0039">
    <property type="taxonomic scope" value="Bacteria"/>
</dbReference>
<dbReference type="HOGENOM" id="CLU_045401_2_1_7"/>
<dbReference type="OrthoDB" id="9802969at2"/>
<dbReference type="Proteomes" id="UP000001935">
    <property type="component" value="Chromosome"/>
</dbReference>
<dbReference type="GO" id="GO:0004459">
    <property type="term" value="F:L-lactate dehydrogenase activity"/>
    <property type="evidence" value="ECO:0007669"/>
    <property type="project" value="TreeGrafter"/>
</dbReference>
<dbReference type="GO" id="GO:0030060">
    <property type="term" value="F:L-malate dehydrogenase (NAD+) activity"/>
    <property type="evidence" value="ECO:0007669"/>
    <property type="project" value="UniProtKB-UniRule"/>
</dbReference>
<dbReference type="GO" id="GO:0006089">
    <property type="term" value="P:lactate metabolic process"/>
    <property type="evidence" value="ECO:0007669"/>
    <property type="project" value="TreeGrafter"/>
</dbReference>
<dbReference type="GO" id="GO:0006099">
    <property type="term" value="P:tricarboxylic acid cycle"/>
    <property type="evidence" value="ECO:0007669"/>
    <property type="project" value="UniProtKB-UniRule"/>
</dbReference>
<dbReference type="CDD" id="cd01339">
    <property type="entry name" value="LDH-like_MDH"/>
    <property type="match status" value="1"/>
</dbReference>
<dbReference type="FunFam" id="3.40.50.720:FF:000018">
    <property type="entry name" value="Malate dehydrogenase"/>
    <property type="match status" value="1"/>
</dbReference>
<dbReference type="FunFam" id="3.90.110.10:FF:000004">
    <property type="entry name" value="Malate dehydrogenase"/>
    <property type="match status" value="1"/>
</dbReference>
<dbReference type="Gene3D" id="3.90.110.10">
    <property type="entry name" value="Lactate dehydrogenase/glycoside hydrolase, family 4, C-terminal"/>
    <property type="match status" value="1"/>
</dbReference>
<dbReference type="Gene3D" id="3.40.50.720">
    <property type="entry name" value="NAD(P)-binding Rossmann-like Domain"/>
    <property type="match status" value="1"/>
</dbReference>
<dbReference type="HAMAP" id="MF_00487">
    <property type="entry name" value="Malate_dehydrog_3"/>
    <property type="match status" value="1"/>
</dbReference>
<dbReference type="InterPro" id="IPR001557">
    <property type="entry name" value="L-lactate/malate_DH"/>
</dbReference>
<dbReference type="InterPro" id="IPR022383">
    <property type="entry name" value="Lactate/malate_DH_C"/>
</dbReference>
<dbReference type="InterPro" id="IPR001236">
    <property type="entry name" value="Lactate/malate_DH_N"/>
</dbReference>
<dbReference type="InterPro" id="IPR015955">
    <property type="entry name" value="Lactate_DH/Glyco_Ohase_4_C"/>
</dbReference>
<dbReference type="InterPro" id="IPR011275">
    <property type="entry name" value="Malate_DH_type3"/>
</dbReference>
<dbReference type="InterPro" id="IPR036291">
    <property type="entry name" value="NAD(P)-bd_dom_sf"/>
</dbReference>
<dbReference type="NCBIfam" id="TIGR01763">
    <property type="entry name" value="MalateDH_bact"/>
    <property type="match status" value="1"/>
</dbReference>
<dbReference type="NCBIfam" id="NF004863">
    <property type="entry name" value="PRK06223.1"/>
    <property type="match status" value="1"/>
</dbReference>
<dbReference type="PANTHER" id="PTHR43128">
    <property type="entry name" value="L-2-HYDROXYCARBOXYLATE DEHYDROGENASE (NAD(P)(+))"/>
    <property type="match status" value="1"/>
</dbReference>
<dbReference type="PANTHER" id="PTHR43128:SF16">
    <property type="entry name" value="L-LACTATE DEHYDROGENASE"/>
    <property type="match status" value="1"/>
</dbReference>
<dbReference type="Pfam" id="PF02866">
    <property type="entry name" value="Ldh_1_C"/>
    <property type="match status" value="1"/>
</dbReference>
<dbReference type="Pfam" id="PF00056">
    <property type="entry name" value="Ldh_1_N"/>
    <property type="match status" value="1"/>
</dbReference>
<dbReference type="PIRSF" id="PIRSF000102">
    <property type="entry name" value="Lac_mal_DH"/>
    <property type="match status" value="1"/>
</dbReference>
<dbReference type="PRINTS" id="PR00086">
    <property type="entry name" value="LLDHDRGNASE"/>
</dbReference>
<dbReference type="SUPFAM" id="SSF56327">
    <property type="entry name" value="LDH C-terminal domain-like"/>
    <property type="match status" value="1"/>
</dbReference>
<dbReference type="SUPFAM" id="SSF51735">
    <property type="entry name" value="NAD(P)-binding Rossmann-fold domains"/>
    <property type="match status" value="1"/>
</dbReference>
<comment type="function">
    <text evidence="1">Catalyzes the reversible oxidation of malate to oxaloacetate.</text>
</comment>
<comment type="catalytic activity">
    <reaction evidence="1">
        <text>(S)-malate + NAD(+) = oxaloacetate + NADH + H(+)</text>
        <dbReference type="Rhea" id="RHEA:21432"/>
        <dbReference type="ChEBI" id="CHEBI:15378"/>
        <dbReference type="ChEBI" id="CHEBI:15589"/>
        <dbReference type="ChEBI" id="CHEBI:16452"/>
        <dbReference type="ChEBI" id="CHEBI:57540"/>
        <dbReference type="ChEBI" id="CHEBI:57945"/>
        <dbReference type="EC" id="1.1.1.37"/>
    </reaction>
</comment>
<comment type="similarity">
    <text evidence="1">Belongs to the LDH/MDH superfamily. MDH type 3 family.</text>
</comment>
<organism>
    <name type="scientific">Anaeromyxobacter dehalogenans (strain 2CP-C)</name>
    <dbReference type="NCBI Taxonomy" id="290397"/>
    <lineage>
        <taxon>Bacteria</taxon>
        <taxon>Pseudomonadati</taxon>
        <taxon>Myxococcota</taxon>
        <taxon>Myxococcia</taxon>
        <taxon>Myxococcales</taxon>
        <taxon>Cystobacterineae</taxon>
        <taxon>Anaeromyxobacteraceae</taxon>
        <taxon>Anaeromyxobacter</taxon>
    </lineage>
</organism>
<feature type="chain" id="PRO_0000241940" description="Malate dehydrogenase 2">
    <location>
        <begin position="1"/>
        <end position="316"/>
    </location>
</feature>
<feature type="active site" description="Proton acceptor" evidence="1">
    <location>
        <position position="176"/>
    </location>
</feature>
<feature type="binding site" evidence="1">
    <location>
        <begin position="10"/>
        <end position="15"/>
    </location>
    <ligand>
        <name>NAD(+)</name>
        <dbReference type="ChEBI" id="CHEBI:57540"/>
    </ligand>
</feature>
<feature type="binding site" evidence="1">
    <location>
        <position position="34"/>
    </location>
    <ligand>
        <name>NAD(+)</name>
        <dbReference type="ChEBI" id="CHEBI:57540"/>
    </ligand>
</feature>
<feature type="binding site" evidence="1">
    <location>
        <position position="83"/>
    </location>
    <ligand>
        <name>substrate</name>
    </ligand>
</feature>
<feature type="binding site" evidence="1">
    <location>
        <position position="89"/>
    </location>
    <ligand>
        <name>substrate</name>
    </ligand>
</feature>
<feature type="binding site" evidence="1">
    <location>
        <position position="96"/>
    </location>
    <ligand>
        <name>NAD(+)</name>
        <dbReference type="ChEBI" id="CHEBI:57540"/>
    </ligand>
</feature>
<feature type="binding site" evidence="1">
    <location>
        <begin position="119"/>
        <end position="121"/>
    </location>
    <ligand>
        <name>NAD(+)</name>
        <dbReference type="ChEBI" id="CHEBI:57540"/>
    </ligand>
</feature>
<feature type="binding site" evidence="1">
    <location>
        <position position="121"/>
    </location>
    <ligand>
        <name>substrate</name>
    </ligand>
</feature>
<feature type="binding site" evidence="1">
    <location>
        <position position="152"/>
    </location>
    <ligand>
        <name>substrate</name>
    </ligand>
</feature>
<sequence>MARSKIALIGGGQIGGVLAQLAALRELGDVVLFDIVEGLPQGKTLDIAEAAPVDGFDVSLKGTNTYEDIKGADVVIVTAGLPRKPGMSRDDLIAVNSKIMTTVAEGIKQYAPNAFVIVISNPLDAMVTLCQRITGFPHNRVVGQAGVLDSARFAAFIAWELGVSVKDVTAVTLGGHGDDMVPLVRYTSVCGVPVMELLEQKYGAAKAAEVMAAMVKRTRGAGGEVVALLKTGSAFYSPASSAIAMAESFLKDQKRVLPTCAFLKGEFGVDGLYVGVPVVIGAGGAERVLQLKLNAEEQAMMDKSVKAVKDLVATLK</sequence>
<proteinExistence type="inferred from homology"/>
<keyword id="KW-0520">NAD</keyword>
<keyword id="KW-0560">Oxidoreductase</keyword>
<keyword id="KW-1185">Reference proteome</keyword>
<keyword id="KW-0816">Tricarboxylic acid cycle</keyword>
<gene>
    <name evidence="1" type="primary">mdh2</name>
    <name type="ordered locus">Adeh_2226</name>
</gene>
<evidence type="ECO:0000255" key="1">
    <source>
        <dbReference type="HAMAP-Rule" id="MF_00487"/>
    </source>
</evidence>
<name>MDH2_ANADE</name>
<accession>Q2IK16</accession>